<proteinExistence type="inferred from homology"/>
<protein>
    <recommendedName>
        <fullName>NAD(P)H-quinone oxidoreductase subunit 5, chloroplastic</fullName>
        <ecNumber>7.1.1.-</ecNumber>
    </recommendedName>
    <alternativeName>
        <fullName>NAD(P)H dehydrogenase subunit 5</fullName>
    </alternativeName>
    <alternativeName>
        <fullName>NADH-plastoquinone oxidoreductase subunit 5</fullName>
    </alternativeName>
</protein>
<sequence length="748" mass="85207">MEYTYQYSWIIPFISLPIPILIGVGLLLFPTATKNLRRLWSFPSILLLSIVMIFAVYLSIDQINTSYIYQYVWSWTINNDFSLELGYFIDPLTCIMAILITTVGIMVLIYSDNYMSHDQGYLRFFAYMSLFNTSMLGLVTSSNLIQIYIFWELVGMCSYLLIGFWFTRPTAANACQKAFVTNRVGDFGLLLGILGLYWTTGSFEFRDLFQIFNNLIDNNEVNFLFLTLCAVLLFAGAVAKSAQFPLHVWLPDAMEGPTPISALIHAATMVAAGIFLVARLLPLFIAIPYIMNLIALIGIITVLFGATLALAQKDIKRSLAYSTMSQLGYMMLALGMGSYQAALFHLITHAYSKALLFLGSGSIIHSMESVVGYSPDKSQNMVLMGGLTKHVPITKNAFLLGTLSLCGVPPLACFWSKDEILNDSWLYSPIFAIIACSTAGLTAFYMFRIYLLTFDGHLNLYCKNYSGKTNNSLYSISLWGKEGSKIIKKNFPFFSLLTMNNKERSSFWMKKTTYPFNSNVTKKMRPFVSSPHFSTKNTFYYPYESENTMLFPMFVLSLFTLFVGVIGSPFTQFNQEAIDLNILDKWLTPSINLLHESSKDSENWYEFVKNATFSVTIAFFGIFIASFFYKPTYSSLQNLNFRNSFVKSFTKNFFFEKIINIIYNWSYNRGYIDTFYRISLIGGIRILAELTYFFDRRIIDGITNAVGILNFFVAESIKYVGGGRISSYILLYLVYLVIFILVIYFVFF</sequence>
<evidence type="ECO:0000250" key="1"/>
<evidence type="ECO:0000255" key="2"/>
<evidence type="ECO:0000305" key="3"/>
<dbReference type="EC" id="7.1.1.-"/>
<dbReference type="EMBL" id="DQ119058">
    <property type="protein sequence ID" value="AAZ94696.1"/>
    <property type="molecule type" value="Genomic_DNA"/>
</dbReference>
<dbReference type="EMBL" id="AJ970307">
    <property type="protein sequence ID" value="CAJ00806.1"/>
    <property type="molecule type" value="Genomic_DNA"/>
</dbReference>
<dbReference type="EMBL" id="DQ865975">
    <property type="protein sequence ID" value="ABI97461.1"/>
    <property type="molecule type" value="Genomic_DNA"/>
</dbReference>
<dbReference type="EMBL" id="DQ865976">
    <property type="protein sequence ID" value="ABI98792.1"/>
    <property type="molecule type" value="Genomic_DNA"/>
</dbReference>
<dbReference type="RefSeq" id="YP_247647.1">
    <property type="nucleotide sequence ID" value="NC_007144.1"/>
</dbReference>
<dbReference type="SMR" id="Q2QD43"/>
<dbReference type="GeneID" id="3429258"/>
<dbReference type="KEGG" id="csv:3429258"/>
<dbReference type="OrthoDB" id="543408at2759"/>
<dbReference type="GO" id="GO:0009535">
    <property type="term" value="C:chloroplast thylakoid membrane"/>
    <property type="evidence" value="ECO:0007669"/>
    <property type="project" value="UniProtKB-SubCell"/>
</dbReference>
<dbReference type="GO" id="GO:0008137">
    <property type="term" value="F:NADH dehydrogenase (ubiquinone) activity"/>
    <property type="evidence" value="ECO:0007669"/>
    <property type="project" value="InterPro"/>
</dbReference>
<dbReference type="GO" id="GO:0048038">
    <property type="term" value="F:quinone binding"/>
    <property type="evidence" value="ECO:0007669"/>
    <property type="project" value="UniProtKB-KW"/>
</dbReference>
<dbReference type="GO" id="GO:0042773">
    <property type="term" value="P:ATP synthesis coupled electron transport"/>
    <property type="evidence" value="ECO:0007669"/>
    <property type="project" value="InterPro"/>
</dbReference>
<dbReference type="Gene3D" id="1.20.5.2700">
    <property type="match status" value="1"/>
</dbReference>
<dbReference type="InterPro" id="IPR002128">
    <property type="entry name" value="NADH_UbQ_OxRdtase_chlpt_su5_C"/>
</dbReference>
<dbReference type="InterPro" id="IPR018393">
    <property type="entry name" value="NADHpl_OxRdtase_5_subgr"/>
</dbReference>
<dbReference type="InterPro" id="IPR001750">
    <property type="entry name" value="ND/Mrp_TM"/>
</dbReference>
<dbReference type="InterPro" id="IPR003945">
    <property type="entry name" value="NU5C-like"/>
</dbReference>
<dbReference type="InterPro" id="IPR001516">
    <property type="entry name" value="Proton_antipo_N"/>
</dbReference>
<dbReference type="NCBIfam" id="TIGR01974">
    <property type="entry name" value="NDH_I_L"/>
    <property type="match status" value="1"/>
</dbReference>
<dbReference type="NCBIfam" id="NF005141">
    <property type="entry name" value="PRK06590.1"/>
    <property type="match status" value="1"/>
</dbReference>
<dbReference type="PANTHER" id="PTHR42829">
    <property type="entry name" value="NADH-UBIQUINONE OXIDOREDUCTASE CHAIN 5"/>
    <property type="match status" value="1"/>
</dbReference>
<dbReference type="PANTHER" id="PTHR42829:SF2">
    <property type="entry name" value="NADH-UBIQUINONE OXIDOREDUCTASE CHAIN 5"/>
    <property type="match status" value="1"/>
</dbReference>
<dbReference type="Pfam" id="PF01010">
    <property type="entry name" value="Proton_antipo_C"/>
    <property type="match status" value="1"/>
</dbReference>
<dbReference type="Pfam" id="PF00361">
    <property type="entry name" value="Proton_antipo_M"/>
    <property type="match status" value="1"/>
</dbReference>
<dbReference type="Pfam" id="PF00662">
    <property type="entry name" value="Proton_antipo_N"/>
    <property type="match status" value="1"/>
</dbReference>
<dbReference type="PRINTS" id="PR01434">
    <property type="entry name" value="NADHDHGNASE5"/>
</dbReference>
<dbReference type="PRINTS" id="PR01435">
    <property type="entry name" value="NPOXDRDTASE5"/>
</dbReference>
<organism>
    <name type="scientific">Cucumis sativus</name>
    <name type="common">Cucumber</name>
    <dbReference type="NCBI Taxonomy" id="3659"/>
    <lineage>
        <taxon>Eukaryota</taxon>
        <taxon>Viridiplantae</taxon>
        <taxon>Streptophyta</taxon>
        <taxon>Embryophyta</taxon>
        <taxon>Tracheophyta</taxon>
        <taxon>Spermatophyta</taxon>
        <taxon>Magnoliopsida</taxon>
        <taxon>eudicotyledons</taxon>
        <taxon>Gunneridae</taxon>
        <taxon>Pentapetalae</taxon>
        <taxon>rosids</taxon>
        <taxon>fabids</taxon>
        <taxon>Cucurbitales</taxon>
        <taxon>Cucurbitaceae</taxon>
        <taxon>Benincaseae</taxon>
        <taxon>Cucumis</taxon>
    </lineage>
</organism>
<comment type="function">
    <text evidence="1">NDH shuttles electrons from NAD(P)H:plastoquinone, via FMN and iron-sulfur (Fe-S) centers, to quinones in the photosynthetic chain and possibly in a chloroplast respiratory chain. The immediate electron acceptor for the enzyme in this species is believed to be plastoquinone. Couples the redox reaction to proton translocation, and thus conserves the redox energy in a proton gradient (By similarity).</text>
</comment>
<comment type="catalytic activity">
    <reaction>
        <text>a plastoquinone + NADH + (n+1) H(+)(in) = a plastoquinol + NAD(+) + n H(+)(out)</text>
        <dbReference type="Rhea" id="RHEA:42608"/>
        <dbReference type="Rhea" id="RHEA-COMP:9561"/>
        <dbReference type="Rhea" id="RHEA-COMP:9562"/>
        <dbReference type="ChEBI" id="CHEBI:15378"/>
        <dbReference type="ChEBI" id="CHEBI:17757"/>
        <dbReference type="ChEBI" id="CHEBI:57540"/>
        <dbReference type="ChEBI" id="CHEBI:57945"/>
        <dbReference type="ChEBI" id="CHEBI:62192"/>
    </reaction>
</comment>
<comment type="catalytic activity">
    <reaction>
        <text>a plastoquinone + NADPH + (n+1) H(+)(in) = a plastoquinol + NADP(+) + n H(+)(out)</text>
        <dbReference type="Rhea" id="RHEA:42612"/>
        <dbReference type="Rhea" id="RHEA-COMP:9561"/>
        <dbReference type="Rhea" id="RHEA-COMP:9562"/>
        <dbReference type="ChEBI" id="CHEBI:15378"/>
        <dbReference type="ChEBI" id="CHEBI:17757"/>
        <dbReference type="ChEBI" id="CHEBI:57783"/>
        <dbReference type="ChEBI" id="CHEBI:58349"/>
        <dbReference type="ChEBI" id="CHEBI:62192"/>
    </reaction>
</comment>
<comment type="subunit">
    <text evidence="1">NDH is composed of at least 16 different subunits, 5 of which are encoded in the nucleus.</text>
</comment>
<comment type="subcellular location">
    <subcellularLocation>
        <location evidence="1">Plastid</location>
        <location evidence="1">Chloroplast thylakoid membrane</location>
        <topology evidence="1">Multi-pass membrane protein</topology>
    </subcellularLocation>
</comment>
<comment type="similarity">
    <text evidence="3">Belongs to the complex I subunit 5 family.</text>
</comment>
<keyword id="KW-0150">Chloroplast</keyword>
<keyword id="KW-0472">Membrane</keyword>
<keyword id="KW-0520">NAD</keyword>
<keyword id="KW-0521">NADP</keyword>
<keyword id="KW-0934">Plastid</keyword>
<keyword id="KW-0618">Plastoquinone</keyword>
<keyword id="KW-0874">Quinone</keyword>
<keyword id="KW-0793">Thylakoid</keyword>
<keyword id="KW-1278">Translocase</keyword>
<keyword id="KW-0812">Transmembrane</keyword>
<keyword id="KW-1133">Transmembrane helix</keyword>
<keyword id="KW-0813">Transport</keyword>
<accession>Q2QD43</accession>
<accession>Q4VZM1</accession>
<feature type="chain" id="PRO_0000360928" description="NAD(P)H-quinone oxidoreductase subunit 5, chloroplastic">
    <location>
        <begin position="1"/>
        <end position="748"/>
    </location>
</feature>
<feature type="transmembrane region" description="Helical" evidence="2">
    <location>
        <begin position="9"/>
        <end position="29"/>
    </location>
</feature>
<feature type="transmembrane region" description="Helical" evidence="2">
    <location>
        <begin position="40"/>
        <end position="60"/>
    </location>
</feature>
<feature type="transmembrane region" description="Helical" evidence="2">
    <location>
        <begin position="89"/>
        <end position="109"/>
    </location>
</feature>
<feature type="transmembrane region" description="Helical" evidence="2">
    <location>
        <begin position="125"/>
        <end position="145"/>
    </location>
</feature>
<feature type="transmembrane region" description="Helical" evidence="2">
    <location>
        <begin position="147"/>
        <end position="167"/>
    </location>
</feature>
<feature type="transmembrane region" description="Helical" evidence="2">
    <location>
        <begin position="185"/>
        <end position="205"/>
    </location>
</feature>
<feature type="transmembrane region" description="Helical" evidence="2">
    <location>
        <begin position="219"/>
        <end position="239"/>
    </location>
</feature>
<feature type="transmembrane region" description="Helical" evidence="2">
    <location>
        <begin position="258"/>
        <end position="278"/>
    </location>
</feature>
<feature type="transmembrane region" description="Helical" evidence="2">
    <location>
        <begin position="280"/>
        <end position="300"/>
    </location>
</feature>
<feature type="transmembrane region" description="Helical" evidence="2">
    <location>
        <begin position="327"/>
        <end position="347"/>
    </location>
</feature>
<feature type="transmembrane region" description="Helical" evidence="2">
    <location>
        <begin position="354"/>
        <end position="374"/>
    </location>
</feature>
<feature type="transmembrane region" description="Helical" evidence="2">
    <location>
        <begin position="396"/>
        <end position="416"/>
    </location>
</feature>
<feature type="transmembrane region" description="Helical" evidence="2">
    <location>
        <begin position="425"/>
        <end position="445"/>
    </location>
</feature>
<feature type="transmembrane region" description="Helical" evidence="2">
    <location>
        <begin position="550"/>
        <end position="570"/>
    </location>
</feature>
<feature type="transmembrane region" description="Helical" evidence="2">
    <location>
        <begin position="611"/>
        <end position="631"/>
    </location>
</feature>
<feature type="transmembrane region" description="Helical" evidence="2">
    <location>
        <begin position="728"/>
        <end position="748"/>
    </location>
</feature>
<feature type="sequence variant" description="In strain: cv. Borszczagowski.">
    <original>V</original>
    <variation>G</variation>
    <location>
        <position position="154"/>
    </location>
</feature>
<feature type="sequence variant" description="In strain: cv. Borszczagowski.">
    <original>T</original>
    <variation>S</variation>
    <location>
        <position position="170"/>
    </location>
</feature>
<feature type="sequence variant" description="In strain: cv. Borszczagowski.">
    <original>C</original>
    <variation>G</variation>
    <location>
        <position position="175"/>
    </location>
</feature>
<feature type="sequence variant" description="In strain: cv. Borszczagowski.">
    <original>G</original>
    <variation>A</variation>
    <location>
        <position position="201"/>
    </location>
</feature>
<feature type="sequence variant" description="In strain: cv. Borszczagowski.">
    <original>T</original>
    <variation>I</variation>
    <location>
        <position position="513"/>
    </location>
</feature>
<feature type="sequence variant" description="In strain: cv. Borszczagowski.">
    <original>F</original>
    <variation>C</variation>
    <location>
        <position position="748"/>
    </location>
</feature>
<name>NU5C_CUCSA</name>
<reference key="1">
    <citation type="journal article" date="2006" name="Plant Cell Rep.">
        <title>Complete sequence and organization of the cucumber (Cucumis sativus L. cv. Baekmibaekdadagi) chloroplast genome.</title>
        <authorList>
            <person name="Kim J.-S."/>
            <person name="Jung J.D."/>
            <person name="Lee J.-A."/>
            <person name="Park H.-W."/>
            <person name="Oh K.-H."/>
            <person name="Jeong W.J."/>
            <person name="Choi D.-W."/>
            <person name="Liu J.R."/>
            <person name="Cho K.Y."/>
        </authorList>
    </citation>
    <scope>NUCLEOTIDE SEQUENCE [LARGE SCALE GENOMIC DNA]</scope>
    <source>
        <strain>cv. Baekmibaekdadagi</strain>
    </source>
</reference>
<reference key="2">
    <citation type="journal article" date="2007" name="Cell. Mol. Biol. Lett.">
        <title>The complete structure of the cucumber (Cucumis sativus L.) chloroplast genome: its composition and comparative analysis.</title>
        <authorList>
            <person name="Plader W.W."/>
            <person name="Yukawa Y."/>
            <person name="Sugiura M."/>
            <person name="Malepszy S."/>
        </authorList>
    </citation>
    <scope>NUCLEOTIDE SEQUENCE [LARGE SCALE GENOMIC DNA]</scope>
    <source>
        <strain>cv. Borszczagowski</strain>
    </source>
</reference>
<reference key="3">
    <citation type="journal article" date="2007" name="Genome">
        <title>Sequencing cucumber (Cucumis sativus L.) chloroplast genomes identifies differences between chilling-tolerant and -susceptible cucumber lines.</title>
        <authorList>
            <person name="Chung S.-M."/>
            <person name="Gordon V.S."/>
            <person name="Staub J.E."/>
        </authorList>
    </citation>
    <scope>NUCLEOTIDE SEQUENCE [LARGE SCALE GENOMIC DNA]</scope>
    <source>
        <strain>cv. Chipper</strain>
        <strain>cv. Gy14</strain>
    </source>
</reference>
<gene>
    <name type="primary">ndhF</name>
</gene>
<geneLocation type="chloroplast"/>